<accession>Q8K1H7</accession>
<accession>Q8C2D5</accession>
<name>T11L2_MOUSE</name>
<reference key="1">
    <citation type="journal article" date="2005" name="Science">
        <title>The transcriptional landscape of the mammalian genome.</title>
        <authorList>
            <person name="Carninci P."/>
            <person name="Kasukawa T."/>
            <person name="Katayama S."/>
            <person name="Gough J."/>
            <person name="Frith M.C."/>
            <person name="Maeda N."/>
            <person name="Oyama R."/>
            <person name="Ravasi T."/>
            <person name="Lenhard B."/>
            <person name="Wells C."/>
            <person name="Kodzius R."/>
            <person name="Shimokawa K."/>
            <person name="Bajic V.B."/>
            <person name="Brenner S.E."/>
            <person name="Batalov S."/>
            <person name="Forrest A.R."/>
            <person name="Zavolan M."/>
            <person name="Davis M.J."/>
            <person name="Wilming L.G."/>
            <person name="Aidinis V."/>
            <person name="Allen J.E."/>
            <person name="Ambesi-Impiombato A."/>
            <person name="Apweiler R."/>
            <person name="Aturaliya R.N."/>
            <person name="Bailey T.L."/>
            <person name="Bansal M."/>
            <person name="Baxter L."/>
            <person name="Beisel K.W."/>
            <person name="Bersano T."/>
            <person name="Bono H."/>
            <person name="Chalk A.M."/>
            <person name="Chiu K.P."/>
            <person name="Choudhary V."/>
            <person name="Christoffels A."/>
            <person name="Clutterbuck D.R."/>
            <person name="Crowe M.L."/>
            <person name="Dalla E."/>
            <person name="Dalrymple B.P."/>
            <person name="de Bono B."/>
            <person name="Della Gatta G."/>
            <person name="di Bernardo D."/>
            <person name="Down T."/>
            <person name="Engstrom P."/>
            <person name="Fagiolini M."/>
            <person name="Faulkner G."/>
            <person name="Fletcher C.F."/>
            <person name="Fukushima T."/>
            <person name="Furuno M."/>
            <person name="Futaki S."/>
            <person name="Gariboldi M."/>
            <person name="Georgii-Hemming P."/>
            <person name="Gingeras T.R."/>
            <person name="Gojobori T."/>
            <person name="Green R.E."/>
            <person name="Gustincich S."/>
            <person name="Harbers M."/>
            <person name="Hayashi Y."/>
            <person name="Hensch T.K."/>
            <person name="Hirokawa N."/>
            <person name="Hill D."/>
            <person name="Huminiecki L."/>
            <person name="Iacono M."/>
            <person name="Ikeo K."/>
            <person name="Iwama A."/>
            <person name="Ishikawa T."/>
            <person name="Jakt M."/>
            <person name="Kanapin A."/>
            <person name="Katoh M."/>
            <person name="Kawasawa Y."/>
            <person name="Kelso J."/>
            <person name="Kitamura H."/>
            <person name="Kitano H."/>
            <person name="Kollias G."/>
            <person name="Krishnan S.P."/>
            <person name="Kruger A."/>
            <person name="Kummerfeld S.K."/>
            <person name="Kurochkin I.V."/>
            <person name="Lareau L.F."/>
            <person name="Lazarevic D."/>
            <person name="Lipovich L."/>
            <person name="Liu J."/>
            <person name="Liuni S."/>
            <person name="McWilliam S."/>
            <person name="Madan Babu M."/>
            <person name="Madera M."/>
            <person name="Marchionni L."/>
            <person name="Matsuda H."/>
            <person name="Matsuzawa S."/>
            <person name="Miki H."/>
            <person name="Mignone F."/>
            <person name="Miyake S."/>
            <person name="Morris K."/>
            <person name="Mottagui-Tabar S."/>
            <person name="Mulder N."/>
            <person name="Nakano N."/>
            <person name="Nakauchi H."/>
            <person name="Ng P."/>
            <person name="Nilsson R."/>
            <person name="Nishiguchi S."/>
            <person name="Nishikawa S."/>
            <person name="Nori F."/>
            <person name="Ohara O."/>
            <person name="Okazaki Y."/>
            <person name="Orlando V."/>
            <person name="Pang K.C."/>
            <person name="Pavan W.J."/>
            <person name="Pavesi G."/>
            <person name="Pesole G."/>
            <person name="Petrovsky N."/>
            <person name="Piazza S."/>
            <person name="Reed J."/>
            <person name="Reid J.F."/>
            <person name="Ring B.Z."/>
            <person name="Ringwald M."/>
            <person name="Rost B."/>
            <person name="Ruan Y."/>
            <person name="Salzberg S.L."/>
            <person name="Sandelin A."/>
            <person name="Schneider C."/>
            <person name="Schoenbach C."/>
            <person name="Sekiguchi K."/>
            <person name="Semple C.A."/>
            <person name="Seno S."/>
            <person name="Sessa L."/>
            <person name="Sheng Y."/>
            <person name="Shibata Y."/>
            <person name="Shimada H."/>
            <person name="Shimada K."/>
            <person name="Silva D."/>
            <person name="Sinclair B."/>
            <person name="Sperling S."/>
            <person name="Stupka E."/>
            <person name="Sugiura K."/>
            <person name="Sultana R."/>
            <person name="Takenaka Y."/>
            <person name="Taki K."/>
            <person name="Tammoja K."/>
            <person name="Tan S.L."/>
            <person name="Tang S."/>
            <person name="Taylor M.S."/>
            <person name="Tegner J."/>
            <person name="Teichmann S.A."/>
            <person name="Ueda H.R."/>
            <person name="van Nimwegen E."/>
            <person name="Verardo R."/>
            <person name="Wei C.L."/>
            <person name="Yagi K."/>
            <person name="Yamanishi H."/>
            <person name="Zabarovsky E."/>
            <person name="Zhu S."/>
            <person name="Zimmer A."/>
            <person name="Hide W."/>
            <person name="Bult C."/>
            <person name="Grimmond S.M."/>
            <person name="Teasdale R.D."/>
            <person name="Liu E.T."/>
            <person name="Brusic V."/>
            <person name="Quackenbush J."/>
            <person name="Wahlestedt C."/>
            <person name="Mattick J.S."/>
            <person name="Hume D.A."/>
            <person name="Kai C."/>
            <person name="Sasaki D."/>
            <person name="Tomaru Y."/>
            <person name="Fukuda S."/>
            <person name="Kanamori-Katayama M."/>
            <person name="Suzuki M."/>
            <person name="Aoki J."/>
            <person name="Arakawa T."/>
            <person name="Iida J."/>
            <person name="Imamura K."/>
            <person name="Itoh M."/>
            <person name="Kato T."/>
            <person name="Kawaji H."/>
            <person name="Kawagashira N."/>
            <person name="Kawashima T."/>
            <person name="Kojima M."/>
            <person name="Kondo S."/>
            <person name="Konno H."/>
            <person name="Nakano K."/>
            <person name="Ninomiya N."/>
            <person name="Nishio T."/>
            <person name="Okada M."/>
            <person name="Plessy C."/>
            <person name="Shibata K."/>
            <person name="Shiraki T."/>
            <person name="Suzuki S."/>
            <person name="Tagami M."/>
            <person name="Waki K."/>
            <person name="Watahiki A."/>
            <person name="Okamura-Oho Y."/>
            <person name="Suzuki H."/>
            <person name="Kawai J."/>
            <person name="Hayashizaki Y."/>
        </authorList>
    </citation>
    <scope>NUCLEOTIDE SEQUENCE [LARGE SCALE MRNA]</scope>
    <source>
        <strain>C57BL/6J</strain>
        <strain>NOD</strain>
        <tissue>Placenta</tissue>
        <tissue>Thymus</tissue>
    </source>
</reference>
<reference key="2">
    <citation type="journal article" date="2004" name="Genome Res.">
        <title>The status, quality, and expansion of the NIH full-length cDNA project: the Mammalian Gene Collection (MGC).</title>
        <authorList>
            <consortium name="The MGC Project Team"/>
        </authorList>
    </citation>
    <scope>NUCLEOTIDE SEQUENCE [LARGE SCALE MRNA]</scope>
    <source>
        <tissue>Eye</tissue>
    </source>
</reference>
<reference key="3">
    <citation type="journal article" date="2010" name="Cell">
        <title>A tissue-specific atlas of mouse protein phosphorylation and expression.</title>
        <authorList>
            <person name="Huttlin E.L."/>
            <person name="Jedrychowski M.P."/>
            <person name="Elias J.E."/>
            <person name="Goswami T."/>
            <person name="Rad R."/>
            <person name="Beausoleil S.A."/>
            <person name="Villen J."/>
            <person name="Haas W."/>
            <person name="Sowa M.E."/>
            <person name="Gygi S.P."/>
        </authorList>
    </citation>
    <scope>IDENTIFICATION BY MASS SPECTROMETRY [LARGE SCALE ANALYSIS]</scope>
    <source>
        <tissue>Spleen</tissue>
    </source>
</reference>
<protein>
    <recommendedName>
        <fullName evidence="4">T-complex protein 11-like protein 2</fullName>
    </recommendedName>
</protein>
<proteinExistence type="evidence at protein level"/>
<organism>
    <name type="scientific">Mus musculus</name>
    <name type="common">Mouse</name>
    <dbReference type="NCBI Taxonomy" id="10090"/>
    <lineage>
        <taxon>Eukaryota</taxon>
        <taxon>Metazoa</taxon>
        <taxon>Chordata</taxon>
        <taxon>Craniata</taxon>
        <taxon>Vertebrata</taxon>
        <taxon>Euteleostomi</taxon>
        <taxon>Mammalia</taxon>
        <taxon>Eutheria</taxon>
        <taxon>Euarchontoglires</taxon>
        <taxon>Glires</taxon>
        <taxon>Rodentia</taxon>
        <taxon>Myomorpha</taxon>
        <taxon>Muroidea</taxon>
        <taxon>Muridae</taxon>
        <taxon>Murinae</taxon>
        <taxon>Mus</taxon>
        <taxon>Mus</taxon>
    </lineage>
</organism>
<gene>
    <name evidence="5" type="primary">Tcp11l2</name>
</gene>
<keyword id="KW-0963">Cytoplasm</keyword>
<keyword id="KW-0206">Cytoskeleton</keyword>
<keyword id="KW-0597">Phosphoprotein</keyword>
<keyword id="KW-1185">Reference proteome</keyword>
<sequence length="517" mass="57889">MPFNGEKQCVSEDQQSDSESSRFAEGVASLSDYECSRQSFTSDSSSKSSSPASTSPPRGLMFDDVMAAAKNLSDMTLAHEIAVNENFQLKQNALPENSLAGQVKRVVHQAFWDVLEADLSAEPPQYEYAIKLFEEIREILLSFLTPGGNRLHSQICEVLDIDLIRQQAEHSAVDIQGLANYVITTMGKICAPVRDEDIRELKATTNIVEMLRQIFRVLDLMRMDMMNFVIRNIRPHIQHHLVEYERNKFQEVVEETPNALSQTTEWLKESIDKELLSETDVAPAAEHSSTPSLSPLLVLNNCYLKLLQWDYQKKVLPETLMTDGPRLQELSEKLNQLKMTACVALITNNMVGAVTEGLPELANRLKRISAVLLEGMNKETFNLKEALHSIGVQTCAEVNKALEERGSPTLNAEVQANLVGQLSSLEEKDNPVCTLMDKRIQLYMKGLLCLPSTQKSMPPVPGGLDVIQRELEVLGCQYANIVNLNKQVYGPFYANIFRKLLFRDEAVGKIDASLPTN</sequence>
<dbReference type="EMBL" id="AK088802">
    <property type="protein sequence ID" value="BAC40581.1"/>
    <property type="status" value="ALT_INIT"/>
    <property type="molecule type" value="mRNA"/>
</dbReference>
<dbReference type="EMBL" id="AK146035">
    <property type="protein sequence ID" value="BAE26848.1"/>
    <property type="molecule type" value="mRNA"/>
</dbReference>
<dbReference type="EMBL" id="BC029663">
    <property type="protein sequence ID" value="AAH29663.1"/>
    <property type="molecule type" value="mRNA"/>
</dbReference>
<dbReference type="CCDS" id="CCDS36016.1"/>
<dbReference type="RefSeq" id="NP_666120.1">
    <property type="nucleotide sequence ID" value="NM_146008.2"/>
</dbReference>
<dbReference type="SMR" id="Q8K1H7"/>
<dbReference type="BioGRID" id="229722">
    <property type="interactions" value="1"/>
</dbReference>
<dbReference type="FunCoup" id="Q8K1H7">
    <property type="interactions" value="166"/>
</dbReference>
<dbReference type="STRING" id="10090.ENSMUSP00000020223"/>
<dbReference type="iPTMnet" id="Q8K1H7"/>
<dbReference type="PhosphoSitePlus" id="Q8K1H7"/>
<dbReference type="PaxDb" id="10090-ENSMUSP00000020223"/>
<dbReference type="PeptideAtlas" id="Q8K1H7"/>
<dbReference type="ProteomicsDB" id="263210"/>
<dbReference type="Pumba" id="Q8K1H7"/>
<dbReference type="Antibodypedia" id="48241">
    <property type="antibodies" value="265 antibodies from 20 providers"/>
</dbReference>
<dbReference type="DNASU" id="216198"/>
<dbReference type="Ensembl" id="ENSMUST00000020223.8">
    <property type="protein sequence ID" value="ENSMUSP00000020223.8"/>
    <property type="gene ID" value="ENSMUSG00000020034.8"/>
</dbReference>
<dbReference type="GeneID" id="216198"/>
<dbReference type="KEGG" id="mmu:216198"/>
<dbReference type="UCSC" id="uc007gks.1">
    <property type="organism name" value="mouse"/>
</dbReference>
<dbReference type="AGR" id="MGI:2444679"/>
<dbReference type="CTD" id="255394"/>
<dbReference type="MGI" id="MGI:2444679">
    <property type="gene designation" value="Tcp11l2"/>
</dbReference>
<dbReference type="VEuPathDB" id="HostDB:ENSMUSG00000020034"/>
<dbReference type="eggNOG" id="KOG1981">
    <property type="taxonomic scope" value="Eukaryota"/>
</dbReference>
<dbReference type="GeneTree" id="ENSGT00940000157835"/>
<dbReference type="HOGENOM" id="CLU_026469_0_0_1"/>
<dbReference type="InParanoid" id="Q8K1H7"/>
<dbReference type="OMA" id="YVINTMG"/>
<dbReference type="OrthoDB" id="276323at2759"/>
<dbReference type="PhylomeDB" id="Q8K1H7"/>
<dbReference type="TreeFam" id="TF313385"/>
<dbReference type="BioGRID-ORCS" id="216198">
    <property type="hits" value="2 hits in 79 CRISPR screens"/>
</dbReference>
<dbReference type="ChiTaRS" id="Tcp11l2">
    <property type="organism name" value="mouse"/>
</dbReference>
<dbReference type="PRO" id="PR:Q8K1H7"/>
<dbReference type="Proteomes" id="UP000000589">
    <property type="component" value="Chromosome 10"/>
</dbReference>
<dbReference type="RNAct" id="Q8K1H7">
    <property type="molecule type" value="protein"/>
</dbReference>
<dbReference type="Bgee" id="ENSMUSG00000020034">
    <property type="expression patterns" value="Expressed in pedal digit and 233 other cell types or tissues"/>
</dbReference>
<dbReference type="GO" id="GO:0005737">
    <property type="term" value="C:cytoplasm"/>
    <property type="evidence" value="ECO:0000250"/>
    <property type="project" value="UniProtKB"/>
</dbReference>
<dbReference type="GO" id="GO:0005856">
    <property type="term" value="C:cytoskeleton"/>
    <property type="evidence" value="ECO:0007669"/>
    <property type="project" value="UniProtKB-SubCell"/>
</dbReference>
<dbReference type="GO" id="GO:0014812">
    <property type="term" value="P:muscle cell migration"/>
    <property type="evidence" value="ECO:0000250"/>
    <property type="project" value="UniProtKB"/>
</dbReference>
<dbReference type="InterPro" id="IPR008862">
    <property type="entry name" value="Tcp11"/>
</dbReference>
<dbReference type="PANTHER" id="PTHR12832:SF17">
    <property type="entry name" value="T-COMPLEX PROTEIN 11-LIKE PROTEIN 2"/>
    <property type="match status" value="1"/>
</dbReference>
<dbReference type="PANTHER" id="PTHR12832">
    <property type="entry name" value="TESTIS-SPECIFIC PROTEIN PBS13 T-COMPLEX 11"/>
    <property type="match status" value="1"/>
</dbReference>
<dbReference type="Pfam" id="PF05794">
    <property type="entry name" value="Tcp11"/>
    <property type="match status" value="1"/>
</dbReference>
<evidence type="ECO:0000250" key="1">
    <source>
        <dbReference type="UniProtKB" id="A7Z033"/>
    </source>
</evidence>
<evidence type="ECO:0000250" key="2">
    <source>
        <dbReference type="UniProtKB" id="Q568Z0"/>
    </source>
</evidence>
<evidence type="ECO:0000256" key="3">
    <source>
        <dbReference type="SAM" id="MobiDB-lite"/>
    </source>
</evidence>
<evidence type="ECO:0000305" key="4"/>
<evidence type="ECO:0000312" key="5">
    <source>
        <dbReference type="MGI" id="MGI:2444679"/>
    </source>
</evidence>
<comment type="function">
    <text evidence="1">Promotes the migration of muscle-derived satellite cells (MDSCs) during differentiation throught interaction with FMNL2 and therefore may participate in microfilament assembly.</text>
</comment>
<comment type="subunit">
    <text evidence="1">Interacts with FMNL2; this interaction promotes muscle-derived satellite cell (MDSC) migration and differentiation.</text>
</comment>
<comment type="subcellular location">
    <subcellularLocation>
        <location evidence="1">Cytoplasm</location>
        <location evidence="1">Cytoskeleton</location>
    </subcellularLocation>
    <text evidence="1">Accumulates around the actin complex before the formation of microfilament bundles and microtubule extension.</text>
</comment>
<comment type="similarity">
    <text evidence="4">Belongs to the TCP11 family.</text>
</comment>
<comment type="sequence caution" evidence="4">
    <conflict type="erroneous initiation">
        <sequence resource="EMBL-CDS" id="BAC40581"/>
    </conflict>
    <text>Truncated N-terminus.</text>
</comment>
<feature type="chain" id="PRO_0000313751" description="T-complex protein 11-like protein 2">
    <location>
        <begin position="1"/>
        <end position="517"/>
    </location>
</feature>
<feature type="region of interest" description="Disordered" evidence="3">
    <location>
        <begin position="1"/>
        <end position="59"/>
    </location>
</feature>
<feature type="compositionally biased region" description="Low complexity" evidence="3">
    <location>
        <begin position="36"/>
        <end position="55"/>
    </location>
</feature>
<feature type="modified residue" description="Phosphoserine" evidence="2">
    <location>
        <position position="16"/>
    </location>
</feature>